<accession>P74371</accession>
<evidence type="ECO:0000255" key="1">
    <source>
        <dbReference type="HAMAP-Rule" id="MF_01460"/>
    </source>
</evidence>
<sequence length="196" mass="22579">MSHSTDLSALARWMAADFSNQAQAFENPPFYAHIRVAIRPLDQAKFGDRLLFLEQAYDFMLQRPYRLRVLKLKVVEDHIEIENFKVKDEEKFYGAARDLGKLAQLTPADLEPMHGCDMIVEWTGTSFKGEVQPGRQCRVMRDGKETYLENSFEVSETGLISLDRGYDPETNERVWGSVAGAFHFVRWQSFADEVSF</sequence>
<dbReference type="EC" id="4.-.-.-" evidence="1"/>
<dbReference type="EMBL" id="BA000022">
    <property type="protein sequence ID" value="BAA18466.1"/>
    <property type="molecule type" value="Genomic_DNA"/>
</dbReference>
<dbReference type="PIR" id="S76207">
    <property type="entry name" value="S76207"/>
</dbReference>
<dbReference type="SMR" id="P74371"/>
<dbReference type="STRING" id="1148.gene:10499344"/>
<dbReference type="PaxDb" id="1148-1653553"/>
<dbReference type="DNASU" id="952924"/>
<dbReference type="EnsemblBacteria" id="BAA18466">
    <property type="protein sequence ID" value="BAA18466"/>
    <property type="gene ID" value="BAA18466"/>
</dbReference>
<dbReference type="KEGG" id="syn:slr1649"/>
<dbReference type="eggNOG" id="ENOG502Z877">
    <property type="taxonomic scope" value="Bacteria"/>
</dbReference>
<dbReference type="InParanoid" id="P74371"/>
<dbReference type="PhylomeDB" id="P74371"/>
<dbReference type="Proteomes" id="UP000001425">
    <property type="component" value="Chromosome"/>
</dbReference>
<dbReference type="GO" id="GO:0016829">
    <property type="term" value="F:lyase activity"/>
    <property type="evidence" value="ECO:0007669"/>
    <property type="project" value="UniProtKB-KW"/>
</dbReference>
<dbReference type="CDD" id="cd16338">
    <property type="entry name" value="CpcT"/>
    <property type="match status" value="1"/>
</dbReference>
<dbReference type="Gene3D" id="2.40.128.590">
    <property type="entry name" value="CpcT/CpeT domain"/>
    <property type="match status" value="1"/>
</dbReference>
<dbReference type="HAMAP" id="MF_01460">
    <property type="entry name" value="Chrphore_lyase_CpxT"/>
    <property type="match status" value="1"/>
</dbReference>
<dbReference type="InterPro" id="IPR010404">
    <property type="entry name" value="CpcT/CpeT"/>
</dbReference>
<dbReference type="InterPro" id="IPR038672">
    <property type="entry name" value="CpcT/CpeT_sf"/>
</dbReference>
<dbReference type="PANTHER" id="PTHR35137">
    <property type="entry name" value="CHROMOPHORE LYASE CRL, CHLOROPLASTIC"/>
    <property type="match status" value="1"/>
</dbReference>
<dbReference type="PANTHER" id="PTHR35137:SF1">
    <property type="entry name" value="CHROMOPHORE LYASE CRL, CHLOROPLASTIC"/>
    <property type="match status" value="1"/>
</dbReference>
<dbReference type="Pfam" id="PF06206">
    <property type="entry name" value="CpeT"/>
    <property type="match status" value="1"/>
</dbReference>
<organism>
    <name type="scientific">Synechocystis sp. (strain ATCC 27184 / PCC 6803 / Kazusa)</name>
    <dbReference type="NCBI Taxonomy" id="1111708"/>
    <lineage>
        <taxon>Bacteria</taxon>
        <taxon>Bacillati</taxon>
        <taxon>Cyanobacteriota</taxon>
        <taxon>Cyanophyceae</taxon>
        <taxon>Synechococcales</taxon>
        <taxon>Merismopediaceae</taxon>
        <taxon>Synechocystis</taxon>
    </lineage>
</organism>
<gene>
    <name evidence="1" type="primary">cpcT</name>
    <name type="ordered locus">slr1649</name>
</gene>
<comment type="function">
    <text evidence="1">Covalently attaches a chromophore to Cys residue(s) of phycobiliproteins.</text>
</comment>
<comment type="similarity">
    <text evidence="1">Belongs to the CpcT/CpeT biliprotein lyase family.</text>
</comment>
<protein>
    <recommendedName>
        <fullName evidence="1">Chromophore lyase CpcT/CpeT</fullName>
        <ecNumber evidence="1">4.-.-.-</ecNumber>
    </recommendedName>
</protein>
<name>CPXT_SYNY3</name>
<feature type="chain" id="PRO_0000403167" description="Chromophore lyase CpcT/CpeT">
    <location>
        <begin position="1"/>
        <end position="196"/>
    </location>
</feature>
<reference key="1">
    <citation type="journal article" date="1996" name="DNA Res.">
        <title>Sequence analysis of the genome of the unicellular cyanobacterium Synechocystis sp. strain PCC6803. II. Sequence determination of the entire genome and assignment of potential protein-coding regions.</title>
        <authorList>
            <person name="Kaneko T."/>
            <person name="Sato S."/>
            <person name="Kotani H."/>
            <person name="Tanaka A."/>
            <person name="Asamizu E."/>
            <person name="Nakamura Y."/>
            <person name="Miyajima N."/>
            <person name="Hirosawa M."/>
            <person name="Sugiura M."/>
            <person name="Sasamoto S."/>
            <person name="Kimura T."/>
            <person name="Hosouchi T."/>
            <person name="Matsuno A."/>
            <person name="Muraki A."/>
            <person name="Nakazaki N."/>
            <person name="Naruo K."/>
            <person name="Okumura S."/>
            <person name="Shimpo S."/>
            <person name="Takeuchi C."/>
            <person name="Wada T."/>
            <person name="Watanabe A."/>
            <person name="Yamada M."/>
            <person name="Yasuda M."/>
            <person name="Tabata S."/>
        </authorList>
    </citation>
    <scope>NUCLEOTIDE SEQUENCE [LARGE SCALE GENOMIC DNA]</scope>
    <source>
        <strain>ATCC 27184 / PCC 6803 / Kazusa</strain>
    </source>
</reference>
<keyword id="KW-0456">Lyase</keyword>
<keyword id="KW-1185">Reference proteome</keyword>
<proteinExistence type="inferred from homology"/>